<comment type="function">
    <text evidence="1">Together with the chaperonin GroEL, plays an essential role in assisting protein folding. The GroEL-GroES system forms a nano-cage that allows encapsulation of the non-native substrate proteins and provides a physical environment optimized to promote and accelerate protein folding. GroES binds to the apical surface of the GroEL ring, thereby capping the opening of the GroEL channel.</text>
</comment>
<comment type="subunit">
    <text evidence="1">Heptamer of 7 subunits arranged in a ring. Interacts with the chaperonin GroEL.</text>
</comment>
<comment type="subcellular location">
    <subcellularLocation>
        <location evidence="1">Cytoplasm</location>
    </subcellularLocation>
</comment>
<comment type="similarity">
    <text evidence="1">Belongs to the GroES chaperonin family.</text>
</comment>
<comment type="sequence caution" evidence="2">
    <conflict type="erroneous initiation">
        <sequence resource="EMBL-CDS" id="ABE04672"/>
    </conflict>
</comment>
<proteinExistence type="inferred from homology"/>
<keyword id="KW-0143">Chaperone</keyword>
<keyword id="KW-0963">Cytoplasm</keyword>
<name>CH10_RICBR</name>
<protein>
    <recommendedName>
        <fullName evidence="1">Co-chaperonin GroES</fullName>
    </recommendedName>
    <alternativeName>
        <fullName evidence="1">10 kDa chaperonin</fullName>
    </alternativeName>
    <alternativeName>
        <fullName evidence="1">Chaperonin-10</fullName>
        <shortName evidence="1">Cpn10</shortName>
    </alternativeName>
</protein>
<organism>
    <name type="scientific">Rickettsia bellii (strain RML369-C)</name>
    <dbReference type="NCBI Taxonomy" id="336407"/>
    <lineage>
        <taxon>Bacteria</taxon>
        <taxon>Pseudomonadati</taxon>
        <taxon>Pseudomonadota</taxon>
        <taxon>Alphaproteobacteria</taxon>
        <taxon>Rickettsiales</taxon>
        <taxon>Rickettsiaceae</taxon>
        <taxon>Rickettsieae</taxon>
        <taxon>Rickettsia</taxon>
        <taxon>belli group</taxon>
    </lineage>
</organism>
<reference key="1">
    <citation type="journal article" date="2006" name="PLoS Genet.">
        <title>Genome sequence of Rickettsia bellii illuminates the role of amoebae in gene exchanges between intracellular pathogens.</title>
        <authorList>
            <person name="Ogata H."/>
            <person name="La Scola B."/>
            <person name="Audic S."/>
            <person name="Renesto P."/>
            <person name="Blanc G."/>
            <person name="Robert C."/>
            <person name="Fournier P.-E."/>
            <person name="Claverie J.-M."/>
            <person name="Raoult D."/>
        </authorList>
    </citation>
    <scope>NUCLEOTIDE SEQUENCE [LARGE SCALE GENOMIC DNA]</scope>
    <source>
        <strain>RML369-C</strain>
    </source>
</reference>
<feature type="chain" id="PRO_0000277942" description="Co-chaperonin GroES">
    <location>
        <begin position="1"/>
        <end position="95"/>
    </location>
</feature>
<sequence>MSFKPLYDRIAIKPIEHEEKTKGGIIIPDTAKEKPMQGEVVAVGKGVRNEKGEVHPLELKVGDKVLYGKWAGTEIKVKGEDLIVMKESDVFGIIN</sequence>
<accession>Q1RIZ2</accession>
<dbReference type="EMBL" id="CP000087">
    <property type="protein sequence ID" value="ABE04672.1"/>
    <property type="status" value="ALT_INIT"/>
    <property type="molecule type" value="Genomic_DNA"/>
</dbReference>
<dbReference type="RefSeq" id="WP_011477260.1">
    <property type="nucleotide sequence ID" value="NC_007940.1"/>
</dbReference>
<dbReference type="SMR" id="Q1RIZ2"/>
<dbReference type="KEGG" id="rbe:RBE_0591"/>
<dbReference type="eggNOG" id="COG0234">
    <property type="taxonomic scope" value="Bacteria"/>
</dbReference>
<dbReference type="HOGENOM" id="CLU_132825_1_0_5"/>
<dbReference type="OrthoDB" id="9806791at2"/>
<dbReference type="Proteomes" id="UP000001951">
    <property type="component" value="Chromosome"/>
</dbReference>
<dbReference type="GO" id="GO:0005737">
    <property type="term" value="C:cytoplasm"/>
    <property type="evidence" value="ECO:0007669"/>
    <property type="project" value="UniProtKB-SubCell"/>
</dbReference>
<dbReference type="GO" id="GO:0005524">
    <property type="term" value="F:ATP binding"/>
    <property type="evidence" value="ECO:0007669"/>
    <property type="project" value="InterPro"/>
</dbReference>
<dbReference type="GO" id="GO:0046872">
    <property type="term" value="F:metal ion binding"/>
    <property type="evidence" value="ECO:0007669"/>
    <property type="project" value="TreeGrafter"/>
</dbReference>
<dbReference type="GO" id="GO:0044183">
    <property type="term" value="F:protein folding chaperone"/>
    <property type="evidence" value="ECO:0007669"/>
    <property type="project" value="InterPro"/>
</dbReference>
<dbReference type="GO" id="GO:0051087">
    <property type="term" value="F:protein-folding chaperone binding"/>
    <property type="evidence" value="ECO:0007669"/>
    <property type="project" value="TreeGrafter"/>
</dbReference>
<dbReference type="GO" id="GO:0051082">
    <property type="term" value="F:unfolded protein binding"/>
    <property type="evidence" value="ECO:0007669"/>
    <property type="project" value="TreeGrafter"/>
</dbReference>
<dbReference type="GO" id="GO:0051085">
    <property type="term" value="P:chaperone cofactor-dependent protein refolding"/>
    <property type="evidence" value="ECO:0007669"/>
    <property type="project" value="TreeGrafter"/>
</dbReference>
<dbReference type="CDD" id="cd00320">
    <property type="entry name" value="cpn10"/>
    <property type="match status" value="1"/>
</dbReference>
<dbReference type="FunFam" id="2.30.33.40:FF:000001">
    <property type="entry name" value="10 kDa chaperonin"/>
    <property type="match status" value="1"/>
</dbReference>
<dbReference type="Gene3D" id="2.30.33.40">
    <property type="entry name" value="GroES chaperonin"/>
    <property type="match status" value="1"/>
</dbReference>
<dbReference type="HAMAP" id="MF_00580">
    <property type="entry name" value="CH10"/>
    <property type="match status" value="1"/>
</dbReference>
<dbReference type="InterPro" id="IPR020818">
    <property type="entry name" value="Chaperonin_GroES"/>
</dbReference>
<dbReference type="InterPro" id="IPR037124">
    <property type="entry name" value="Chaperonin_GroES_sf"/>
</dbReference>
<dbReference type="InterPro" id="IPR018369">
    <property type="entry name" value="Chaprnonin_Cpn10_CS"/>
</dbReference>
<dbReference type="InterPro" id="IPR011032">
    <property type="entry name" value="GroES-like_sf"/>
</dbReference>
<dbReference type="NCBIfam" id="NF001527">
    <property type="entry name" value="PRK00364.1-2"/>
    <property type="match status" value="1"/>
</dbReference>
<dbReference type="NCBIfam" id="NF001529">
    <property type="entry name" value="PRK00364.1-5"/>
    <property type="match status" value="1"/>
</dbReference>
<dbReference type="NCBIfam" id="NF001531">
    <property type="entry name" value="PRK00364.2-2"/>
    <property type="match status" value="1"/>
</dbReference>
<dbReference type="NCBIfam" id="NF001533">
    <property type="entry name" value="PRK00364.2-4"/>
    <property type="match status" value="1"/>
</dbReference>
<dbReference type="PANTHER" id="PTHR10772">
    <property type="entry name" value="10 KDA HEAT SHOCK PROTEIN"/>
    <property type="match status" value="1"/>
</dbReference>
<dbReference type="PANTHER" id="PTHR10772:SF63">
    <property type="entry name" value="20 KDA CHAPERONIN, CHLOROPLASTIC"/>
    <property type="match status" value="1"/>
</dbReference>
<dbReference type="Pfam" id="PF00166">
    <property type="entry name" value="Cpn10"/>
    <property type="match status" value="1"/>
</dbReference>
<dbReference type="PRINTS" id="PR00297">
    <property type="entry name" value="CHAPERONIN10"/>
</dbReference>
<dbReference type="SMART" id="SM00883">
    <property type="entry name" value="Cpn10"/>
    <property type="match status" value="1"/>
</dbReference>
<dbReference type="SUPFAM" id="SSF50129">
    <property type="entry name" value="GroES-like"/>
    <property type="match status" value="1"/>
</dbReference>
<dbReference type="PROSITE" id="PS00681">
    <property type="entry name" value="CHAPERONINS_CPN10"/>
    <property type="match status" value="1"/>
</dbReference>
<gene>
    <name evidence="1" type="primary">groES</name>
    <name evidence="1" type="synonym">groS</name>
    <name type="ordered locus">RBE_0591</name>
</gene>
<evidence type="ECO:0000255" key="1">
    <source>
        <dbReference type="HAMAP-Rule" id="MF_00580"/>
    </source>
</evidence>
<evidence type="ECO:0000305" key="2"/>